<proteinExistence type="evidence at protein level"/>
<evidence type="ECO:0000250" key="1">
    <source>
        <dbReference type="UniProtKB" id="P62837"/>
    </source>
</evidence>
<evidence type="ECO:0000250" key="2">
    <source>
        <dbReference type="UniProtKB" id="P62838"/>
    </source>
</evidence>
<evidence type="ECO:0000255" key="3">
    <source>
        <dbReference type="PROSITE-ProRule" id="PRU00388"/>
    </source>
</evidence>
<evidence type="ECO:0000255" key="4">
    <source>
        <dbReference type="PROSITE-ProRule" id="PRU10133"/>
    </source>
</evidence>
<evidence type="ECO:0000269" key="5">
    <source>
    </source>
</evidence>
<evidence type="ECO:0000269" key="6">
    <source>
    </source>
</evidence>
<organism>
    <name type="scientific">Rattus norvegicus</name>
    <name type="common">Rat</name>
    <dbReference type="NCBI Taxonomy" id="10116"/>
    <lineage>
        <taxon>Eukaryota</taxon>
        <taxon>Metazoa</taxon>
        <taxon>Chordata</taxon>
        <taxon>Craniata</taxon>
        <taxon>Vertebrata</taxon>
        <taxon>Euteleostomi</taxon>
        <taxon>Mammalia</taxon>
        <taxon>Eutheria</taxon>
        <taxon>Euarchontoglires</taxon>
        <taxon>Glires</taxon>
        <taxon>Rodentia</taxon>
        <taxon>Myomorpha</taxon>
        <taxon>Muroidea</taxon>
        <taxon>Muridae</taxon>
        <taxon>Murinae</taxon>
        <taxon>Rattus</taxon>
    </lineage>
</organism>
<gene>
    <name type="primary">Ube2d2</name>
    <name type="synonym">Ubc4</name>
    <name type="synonym">Ubch4</name>
    <name type="synonym">Ubch5b</name>
</gene>
<keyword id="KW-0067">ATP-binding</keyword>
<keyword id="KW-0547">Nucleotide-binding</keyword>
<keyword id="KW-1185">Reference proteome</keyword>
<keyword id="KW-0808">Transferase</keyword>
<keyword id="KW-0833">Ubl conjugation pathway</keyword>
<accession>P62839</accession>
<accession>P51669</accession>
<protein>
    <recommendedName>
        <fullName>Ubiquitin-conjugating enzyme E2 D2</fullName>
        <ecNumber>2.3.2.23</ecNumber>
    </recommendedName>
    <alternativeName>
        <fullName>(E3-independent) E2 ubiquitin-conjugating enzyme D2</fullName>
        <ecNumber>2.3.2.24</ecNumber>
    </alternativeName>
    <alternativeName>
        <fullName>E2 ubiquitin-conjugating enzyme D2</fullName>
    </alternativeName>
    <alternativeName>
        <fullName>Ubiquitin carrier protein D2</fullName>
    </alternativeName>
    <alternativeName>
        <fullName>Ubiquitin-conjugating enzyme E2(17)KB 2</fullName>
    </alternativeName>
    <alternativeName>
        <fullName>Ubiquitin-conjugating enzyme E2-17 kDa 2</fullName>
    </alternativeName>
    <alternativeName>
        <fullName>Ubiquitin-protein ligase D2</fullName>
    </alternativeName>
</protein>
<feature type="chain" id="PRO_0000082464" description="Ubiquitin-conjugating enzyme E2 D2">
    <location>
        <begin position="1"/>
        <end position="147"/>
    </location>
</feature>
<feature type="domain" description="UBC core" evidence="3">
    <location>
        <begin position="1"/>
        <end position="147"/>
    </location>
</feature>
<feature type="active site" description="Glycyl thioester intermediate" evidence="3 4">
    <location>
        <position position="85"/>
    </location>
</feature>
<dbReference type="EC" id="2.3.2.23"/>
<dbReference type="EC" id="2.3.2.24"/>
<dbReference type="EMBL" id="U13176">
    <property type="protein sequence ID" value="AAA85101.1"/>
    <property type="molecule type" value="mRNA"/>
</dbReference>
<dbReference type="PIR" id="S53359">
    <property type="entry name" value="S53359"/>
</dbReference>
<dbReference type="RefSeq" id="NP_001032369.1">
    <property type="nucleotide sequence ID" value="NM_001037292.1"/>
</dbReference>
<dbReference type="RefSeq" id="NP_001380701.1">
    <property type="nucleotide sequence ID" value="NM_001393772.1"/>
</dbReference>
<dbReference type="SMR" id="P62839"/>
<dbReference type="BioGRID" id="566013">
    <property type="interactions" value="1"/>
</dbReference>
<dbReference type="FunCoup" id="P62839">
    <property type="interactions" value="3903"/>
</dbReference>
<dbReference type="iPTMnet" id="P62839"/>
<dbReference type="PhosphoSitePlus" id="P62839"/>
<dbReference type="SwissPalm" id="P62839"/>
<dbReference type="Ensembl" id="ENSRNOT00000095794.1">
    <property type="protein sequence ID" value="ENSRNOP00000088484.1"/>
    <property type="gene ID" value="ENSRNOG00000069286.1"/>
</dbReference>
<dbReference type="GeneID" id="641452"/>
<dbReference type="UCSC" id="RGD:1591897">
    <property type="organism name" value="rat"/>
</dbReference>
<dbReference type="AGR" id="RGD:1591897"/>
<dbReference type="RGD" id="1591897">
    <property type="gene designation" value="Ube2d2"/>
</dbReference>
<dbReference type="GeneTree" id="ENSGT00940000153169"/>
<dbReference type="InParanoid" id="P62839"/>
<dbReference type="OMA" id="VHFTTRI"/>
<dbReference type="Reactome" id="R-RNO-1234176">
    <property type="pathway name" value="Oxygen-dependent proline hydroxylation of Hypoxia-inducible Factor Alpha"/>
</dbReference>
<dbReference type="Reactome" id="R-RNO-5357905">
    <property type="pathway name" value="Regulation of TNFR1 signaling"/>
</dbReference>
<dbReference type="Reactome" id="R-RNO-8866652">
    <property type="pathway name" value="Synthesis of active ubiquitin: roles of E1 and E2 enzymes"/>
</dbReference>
<dbReference type="Reactome" id="R-RNO-8866654">
    <property type="pathway name" value="E3 ubiquitin ligases ubiquitinate target proteins"/>
</dbReference>
<dbReference type="Reactome" id="R-RNO-8951664">
    <property type="pathway name" value="Neddylation"/>
</dbReference>
<dbReference type="Reactome" id="R-RNO-9033241">
    <property type="pathway name" value="Peroxisomal protein import"/>
</dbReference>
<dbReference type="Reactome" id="R-RNO-937041">
    <property type="pathway name" value="IKK complex recruitment mediated by RIP1"/>
</dbReference>
<dbReference type="Reactome" id="R-RNO-9705462">
    <property type="pathway name" value="Inactivation of CSF3 (G-CSF) signaling"/>
</dbReference>
<dbReference type="Reactome" id="R-RNO-983168">
    <property type="pathway name" value="Antigen processing: Ubiquitination &amp; Proteasome degradation"/>
</dbReference>
<dbReference type="UniPathway" id="UPA00143"/>
<dbReference type="PRO" id="PR:P62839"/>
<dbReference type="Proteomes" id="UP000002494">
    <property type="component" value="Chromosome 18"/>
</dbReference>
<dbReference type="GO" id="GO:0005634">
    <property type="term" value="C:nucleus"/>
    <property type="evidence" value="ECO:0000318"/>
    <property type="project" value="GO_Central"/>
</dbReference>
<dbReference type="GO" id="GO:0032991">
    <property type="term" value="C:protein-containing complex"/>
    <property type="evidence" value="ECO:0000266"/>
    <property type="project" value="RGD"/>
</dbReference>
<dbReference type="GO" id="GO:0005524">
    <property type="term" value="F:ATP binding"/>
    <property type="evidence" value="ECO:0007669"/>
    <property type="project" value="UniProtKB-KW"/>
</dbReference>
<dbReference type="GO" id="GO:0061631">
    <property type="term" value="F:ubiquitin conjugating enzyme activity"/>
    <property type="evidence" value="ECO:0000266"/>
    <property type="project" value="RGD"/>
</dbReference>
<dbReference type="GO" id="GO:0061630">
    <property type="term" value="F:ubiquitin protein ligase activity"/>
    <property type="evidence" value="ECO:0000266"/>
    <property type="project" value="RGD"/>
</dbReference>
<dbReference type="GO" id="GO:0004842">
    <property type="term" value="F:ubiquitin-protein transferase activity"/>
    <property type="evidence" value="ECO:0000314"/>
    <property type="project" value="UniProtKB"/>
</dbReference>
<dbReference type="GO" id="GO:0051865">
    <property type="term" value="P:protein autoubiquitination"/>
    <property type="evidence" value="ECO:0000266"/>
    <property type="project" value="RGD"/>
</dbReference>
<dbReference type="GO" id="GO:0070936">
    <property type="term" value="P:protein K48-linked ubiquitination"/>
    <property type="evidence" value="ECO:0000250"/>
    <property type="project" value="UniProtKB"/>
</dbReference>
<dbReference type="GO" id="GO:0000209">
    <property type="term" value="P:protein polyubiquitination"/>
    <property type="evidence" value="ECO:0000266"/>
    <property type="project" value="RGD"/>
</dbReference>
<dbReference type="GO" id="GO:0016567">
    <property type="term" value="P:protein ubiquitination"/>
    <property type="evidence" value="ECO:0000266"/>
    <property type="project" value="RGD"/>
</dbReference>
<dbReference type="GO" id="GO:0006511">
    <property type="term" value="P:ubiquitin-dependent protein catabolic process"/>
    <property type="evidence" value="ECO:0000318"/>
    <property type="project" value="GO_Central"/>
</dbReference>
<dbReference type="CDD" id="cd23792">
    <property type="entry name" value="UBCc_UBE2D"/>
    <property type="match status" value="1"/>
</dbReference>
<dbReference type="FunFam" id="3.10.110.10:FF:000101">
    <property type="entry name" value="Ubiquitin-conjugating enzyme E2 D2"/>
    <property type="match status" value="1"/>
</dbReference>
<dbReference type="Gene3D" id="3.10.110.10">
    <property type="entry name" value="Ubiquitin Conjugating Enzyme"/>
    <property type="match status" value="1"/>
</dbReference>
<dbReference type="InterPro" id="IPR000608">
    <property type="entry name" value="UBQ-conjugat_E2_core"/>
</dbReference>
<dbReference type="InterPro" id="IPR023313">
    <property type="entry name" value="UBQ-conjugating_AS"/>
</dbReference>
<dbReference type="InterPro" id="IPR016135">
    <property type="entry name" value="UBQ-conjugating_enzyme/RWD"/>
</dbReference>
<dbReference type="PANTHER" id="PTHR24068">
    <property type="entry name" value="UBIQUITIN-CONJUGATING ENZYME E2"/>
    <property type="match status" value="1"/>
</dbReference>
<dbReference type="Pfam" id="PF00179">
    <property type="entry name" value="UQ_con"/>
    <property type="match status" value="1"/>
</dbReference>
<dbReference type="SMART" id="SM00212">
    <property type="entry name" value="UBCc"/>
    <property type="match status" value="1"/>
</dbReference>
<dbReference type="SUPFAM" id="SSF54495">
    <property type="entry name" value="UBC-like"/>
    <property type="match status" value="1"/>
</dbReference>
<dbReference type="PROSITE" id="PS00183">
    <property type="entry name" value="UBC_1"/>
    <property type="match status" value="1"/>
</dbReference>
<dbReference type="PROSITE" id="PS50127">
    <property type="entry name" value="UBC_2"/>
    <property type="match status" value="1"/>
</dbReference>
<comment type="function">
    <text evidence="1 5">Accepts ubiquitin from the E1 complex and catalyzes its covalent attachment to other proteins. In vitro catalyzes 'Lys-48'-linked polyubiquitination. Mediates the selective degradation of short-lived and abnormal proteins. Functions in the E6/E6-AP-induced ubiquitination of p53/TP53. Mediates ubiquitination of PEX5 and SQSTM1 and autoubiquitination of STUB1 and TRAF6. Involved in the signal-induced conjugation and subsequent degradation of NFKBIA, FBXW2-mediated GCM1 ubiquitination and degradation, MDM2-dependent degradation of p53/TP53 and the activation of MAVS in the mitochondria by RIGI in response to viral infection. Essential for viral activation of IRF3 (By similarity). Mediates ubiquitination of PEX5.</text>
</comment>
<comment type="catalytic activity">
    <reaction evidence="1 3 4">
        <text>S-ubiquitinyl-[E1 ubiquitin-activating enzyme]-L-cysteine + [E2 ubiquitin-conjugating enzyme]-L-cysteine = [E1 ubiquitin-activating enzyme]-L-cysteine + S-ubiquitinyl-[E2 ubiquitin-conjugating enzyme]-L-cysteine.</text>
        <dbReference type="EC" id="2.3.2.23"/>
    </reaction>
</comment>
<comment type="catalytic activity">
    <reaction evidence="1">
        <text>S-ubiquitinyl-[E1 ubiquitin-activating enzyme]-L-cysteine + [acceptor protein]-L-lysine = [E1 ubiquitin-activating enzyme]-L-cysteine + N(6)-monoubiquitinyl-[acceptor protein]-L-lysine.</text>
        <dbReference type="EC" id="2.3.2.24"/>
    </reaction>
</comment>
<comment type="pathway">
    <text evidence="3">Protein modification; protein ubiquitination.</text>
</comment>
<comment type="subunit">
    <text evidence="1 2">Interacts with SCF (SKP1-CUL1-F-box protein) E3 ubiquitin ligase complex. Interacts with CNOT4 (via RING domain). Interacts with E3 ubiquitin-protein ligases CBLC, PJA1 and PJA2. Interacts with PDZRN3. Interacts with PPP1R11. Interacts with E3 ubiquitin-protein ligase PHF7; the interaction inhibits cleavage of PHF7 and promotes association of the complex with the nucleosome core particle (By similarity).</text>
</comment>
<comment type="tissue specificity">
    <text evidence="6">Highly expressed in testis.</text>
</comment>
<comment type="similarity">
    <text evidence="3">Belongs to the ubiquitin-conjugating enzyme family.</text>
</comment>
<name>UB2D2_RAT</name>
<reference key="1">
    <citation type="journal article" date="1995" name="Biochem. J.">
        <title>Molecular cloning, expression and characterization of a ubiquitin conjugation enzyme (E2(17)kB) highly expressed in rat testis.</title>
        <authorList>
            <person name="Wing S.S."/>
            <person name="Jain P."/>
        </authorList>
    </citation>
    <scope>NUCLEOTIDE SEQUENCE [MRNA]</scope>
    <scope>TISSUE SPECIFICITY</scope>
    <source>
        <tissue>Testis</tissue>
    </source>
</reference>
<reference key="2">
    <citation type="journal article" date="2008" name="J. Biol. Chem.">
        <title>Members of the E2D (UbcH5) family mediate the ubiquitination of the conserved cysteine of Pex5p, the peroxisomal import receptor.</title>
        <authorList>
            <person name="Grou C.P."/>
            <person name="Carvalho A.F."/>
            <person name="Pinto M.P."/>
            <person name="Wiese S."/>
            <person name="Piechura H."/>
            <person name="Meyer H.E."/>
            <person name="Warscheid B."/>
            <person name="Sa-Miranda C."/>
            <person name="Azevedo J.E."/>
        </authorList>
    </citation>
    <scope>FUNCTION</scope>
    <scope>IDENTIFICATION BY MASS SPECTROMETRY</scope>
</reference>
<sequence>MALKRIHKELNDLARDPPAQCSAGPVGDDMFHWQATIMGPNDSPYQGGVFFLTIHFPTDYPFKPPKVAFTTRIYHPNINSNGSICLDILRSQWSPALTISKVLLSICSLLCDPNPDDPLVPEIARIYKTDREKYNRIAREWTQKYAM</sequence>